<proteinExistence type="inferred from homology"/>
<name>PTH_HALWD</name>
<keyword id="KW-0963">Cytoplasm</keyword>
<keyword id="KW-0378">Hydrolase</keyword>
<keyword id="KW-1185">Reference proteome</keyword>
<comment type="function">
    <text evidence="1">The natural substrate for this enzyme may be peptidyl-tRNAs which drop off the ribosome during protein synthesis.</text>
</comment>
<comment type="catalytic activity">
    <reaction evidence="1">
        <text>an N-acyl-L-alpha-aminoacyl-tRNA + H2O = an N-acyl-L-amino acid + a tRNA + H(+)</text>
        <dbReference type="Rhea" id="RHEA:54448"/>
        <dbReference type="Rhea" id="RHEA-COMP:10123"/>
        <dbReference type="Rhea" id="RHEA-COMP:13883"/>
        <dbReference type="ChEBI" id="CHEBI:15377"/>
        <dbReference type="ChEBI" id="CHEBI:15378"/>
        <dbReference type="ChEBI" id="CHEBI:59874"/>
        <dbReference type="ChEBI" id="CHEBI:78442"/>
        <dbReference type="ChEBI" id="CHEBI:138191"/>
        <dbReference type="EC" id="3.1.1.29"/>
    </reaction>
</comment>
<comment type="subcellular location">
    <subcellularLocation>
        <location evidence="1">Cytoplasm</location>
    </subcellularLocation>
</comment>
<comment type="similarity">
    <text evidence="1">Belongs to the PTH2 family.</text>
</comment>
<dbReference type="EC" id="3.1.1.29" evidence="1"/>
<dbReference type="EMBL" id="AM180088">
    <property type="protein sequence ID" value="CAJ51408.1"/>
    <property type="molecule type" value="Genomic_DNA"/>
</dbReference>
<dbReference type="RefSeq" id="WP_011570567.1">
    <property type="nucleotide sequence ID" value="NC_008212.1"/>
</dbReference>
<dbReference type="SMR" id="Q18KN8"/>
<dbReference type="STRING" id="362976.HQ_1279A"/>
<dbReference type="GeneID" id="4192225"/>
<dbReference type="KEGG" id="hwa:HQ_1279A"/>
<dbReference type="eggNOG" id="arCOG04228">
    <property type="taxonomic scope" value="Archaea"/>
</dbReference>
<dbReference type="HOGENOM" id="CLU_073661_2_2_2"/>
<dbReference type="Proteomes" id="UP000001975">
    <property type="component" value="Chromosome"/>
</dbReference>
<dbReference type="GO" id="GO:0005829">
    <property type="term" value="C:cytosol"/>
    <property type="evidence" value="ECO:0007669"/>
    <property type="project" value="TreeGrafter"/>
</dbReference>
<dbReference type="GO" id="GO:0004045">
    <property type="term" value="F:peptidyl-tRNA hydrolase activity"/>
    <property type="evidence" value="ECO:0007669"/>
    <property type="project" value="UniProtKB-UniRule"/>
</dbReference>
<dbReference type="GO" id="GO:0006412">
    <property type="term" value="P:translation"/>
    <property type="evidence" value="ECO:0007669"/>
    <property type="project" value="UniProtKB-UniRule"/>
</dbReference>
<dbReference type="CDD" id="cd02430">
    <property type="entry name" value="PTH2"/>
    <property type="match status" value="1"/>
</dbReference>
<dbReference type="FunFam" id="3.40.1490.10:FF:000001">
    <property type="entry name" value="Peptidyl-tRNA hydrolase 2"/>
    <property type="match status" value="1"/>
</dbReference>
<dbReference type="Gene3D" id="3.40.1490.10">
    <property type="entry name" value="Bit1"/>
    <property type="match status" value="1"/>
</dbReference>
<dbReference type="HAMAP" id="MF_00628">
    <property type="entry name" value="Pept_tRNA_hydro_arch"/>
    <property type="match status" value="1"/>
</dbReference>
<dbReference type="InterPro" id="IPR023476">
    <property type="entry name" value="Pep_tRNA_hydro_II_dom_sf"/>
</dbReference>
<dbReference type="InterPro" id="IPR034759">
    <property type="entry name" value="Pept_tRNA_hydro_arch"/>
</dbReference>
<dbReference type="InterPro" id="IPR002833">
    <property type="entry name" value="PTH2"/>
</dbReference>
<dbReference type="NCBIfam" id="TIGR00283">
    <property type="entry name" value="arch_pth2"/>
    <property type="match status" value="1"/>
</dbReference>
<dbReference type="NCBIfam" id="NF003314">
    <property type="entry name" value="PRK04322.1"/>
    <property type="match status" value="1"/>
</dbReference>
<dbReference type="PANTHER" id="PTHR12649">
    <property type="entry name" value="PEPTIDYL-TRNA HYDROLASE 2"/>
    <property type="match status" value="1"/>
</dbReference>
<dbReference type="PANTHER" id="PTHR12649:SF11">
    <property type="entry name" value="PEPTIDYL-TRNA HYDROLASE 2, MITOCHONDRIAL"/>
    <property type="match status" value="1"/>
</dbReference>
<dbReference type="Pfam" id="PF01981">
    <property type="entry name" value="PTH2"/>
    <property type="match status" value="1"/>
</dbReference>
<dbReference type="SUPFAM" id="SSF102462">
    <property type="entry name" value="Peptidyl-tRNA hydrolase II"/>
    <property type="match status" value="1"/>
</dbReference>
<organism>
    <name type="scientific">Haloquadratum walsbyi (strain DSM 16790 / HBSQ001)</name>
    <dbReference type="NCBI Taxonomy" id="362976"/>
    <lineage>
        <taxon>Archaea</taxon>
        <taxon>Methanobacteriati</taxon>
        <taxon>Methanobacteriota</taxon>
        <taxon>Stenosarchaea group</taxon>
        <taxon>Halobacteria</taxon>
        <taxon>Halobacteriales</taxon>
        <taxon>Haloferacaceae</taxon>
        <taxon>Haloquadratum</taxon>
    </lineage>
</organism>
<reference key="1">
    <citation type="journal article" date="2006" name="BMC Genomics">
        <title>The genome of the square archaeon Haloquadratum walsbyi: life at the limits of water activity.</title>
        <authorList>
            <person name="Bolhuis H."/>
            <person name="Palm P."/>
            <person name="Wende A."/>
            <person name="Falb M."/>
            <person name="Rampp M."/>
            <person name="Rodriguez-Valera F."/>
            <person name="Pfeiffer F."/>
            <person name="Oesterhelt D."/>
        </authorList>
    </citation>
    <scope>NUCLEOTIDE SEQUENCE [LARGE SCALE GENOMIC DNA]</scope>
    <source>
        <strain>DSM 16790 / HBSQ001</strain>
    </source>
</reference>
<gene>
    <name evidence="1" type="primary">pth</name>
    <name type="ordered locus">HQ_1279A</name>
</gene>
<protein>
    <recommendedName>
        <fullName evidence="1">Peptidyl-tRNA hydrolase</fullName>
        <shortName evidence="1">PTH</shortName>
        <ecNumber evidence="1">3.1.1.29</ecNumber>
    </recommendedName>
</protein>
<accession>Q18KN8</accession>
<feature type="chain" id="PRO_1000051674" description="Peptidyl-tRNA hydrolase">
    <location>
        <begin position="1"/>
        <end position="112"/>
    </location>
</feature>
<sequence>MKQAIVARADLRMGKGKLAAQVAHASLSAVEDTGTRSEKQWKGGGQKKIVLKANSEKKLFQLADEAERDGIPHAVVRDAGHTQLEPGTVTCIAIGPDSDENIDRITGSLSLY</sequence>
<evidence type="ECO:0000255" key="1">
    <source>
        <dbReference type="HAMAP-Rule" id="MF_00628"/>
    </source>
</evidence>